<proteinExistence type="inferred from homology"/>
<sequence>MELLKEVILESEEDTYKLAEEIAQLLKGSEVICLRGTLGAGKTTFVKALAKALKVKNPSAVRSPTFTLVNEYETDKGKLIHIDLYRVPDFDYSEFIGEGILAVEWEERDKPCDIILEIEILDENKRKVRIYRK</sequence>
<name>TSAE_AQUAE</name>
<feature type="chain" id="PRO_0000096210" description="tRNA threonylcarbamoyladenosine biosynthesis protein TsaE">
    <location>
        <begin position="1"/>
        <end position="133"/>
    </location>
</feature>
<feature type="binding site" evidence="1">
    <location>
        <position position="12"/>
    </location>
    <ligand>
        <name>ATP</name>
        <dbReference type="ChEBI" id="CHEBI:30616"/>
    </ligand>
</feature>
<feature type="binding site" evidence="1">
    <location>
        <begin position="39"/>
        <end position="44"/>
    </location>
    <ligand>
        <name>ATP</name>
        <dbReference type="ChEBI" id="CHEBI:30616"/>
    </ligand>
</feature>
<feature type="binding site" evidence="1">
    <location>
        <position position="43"/>
    </location>
    <ligand>
        <name>Mg(2+)</name>
        <dbReference type="ChEBI" id="CHEBI:18420"/>
    </ligand>
</feature>
<feature type="binding site" evidence="1">
    <location>
        <position position="104"/>
    </location>
    <ligand>
        <name>Mg(2+)</name>
        <dbReference type="ChEBI" id="CHEBI:18420"/>
    </ligand>
</feature>
<reference key="1">
    <citation type="journal article" date="1998" name="Nature">
        <title>The complete genome of the hyperthermophilic bacterium Aquifex aeolicus.</title>
        <authorList>
            <person name="Deckert G."/>
            <person name="Warren P.V."/>
            <person name="Gaasterland T."/>
            <person name="Young W.G."/>
            <person name="Lenox A.L."/>
            <person name="Graham D.E."/>
            <person name="Overbeek R."/>
            <person name="Snead M.A."/>
            <person name="Keller M."/>
            <person name="Aujay M."/>
            <person name="Huber R."/>
            <person name="Feldman R.A."/>
            <person name="Short J.M."/>
            <person name="Olsen G.J."/>
            <person name="Swanson R.V."/>
        </authorList>
    </citation>
    <scope>NUCLEOTIDE SEQUENCE [LARGE SCALE GENOMIC DNA]</scope>
    <source>
        <strain>VF5</strain>
    </source>
</reference>
<accession>O67011</accession>
<protein>
    <recommendedName>
        <fullName>tRNA threonylcarbamoyladenosine biosynthesis protein TsaE</fullName>
    </recommendedName>
    <alternativeName>
        <fullName>t(6)A37 threonylcarbamoyladenosine biosynthesis protein TsaE</fullName>
    </alternativeName>
</protein>
<comment type="function">
    <text evidence="1">Required for the formation of a threonylcarbamoyl group on adenosine at position 37 (t(6)A37) in tRNAs that read codons beginning with adenine. Is involved in the transfer of the threonylcarbamoyl moiety of threonylcarbamoyl-AMP (TC-AMP) to the N6 group of A37, together with TsaD and TsaB. TsaE seems to play an indirect role in the t(6)A biosynthesis pathway, possibly in regulating the core enzymatic function of TsaD (By similarity).</text>
</comment>
<comment type="subcellular location">
    <subcellularLocation>
        <location evidence="1">Cytoplasm</location>
    </subcellularLocation>
</comment>
<comment type="similarity">
    <text evidence="2">Belongs to the TsaE family.</text>
</comment>
<dbReference type="EMBL" id="AE000657">
    <property type="protein sequence ID" value="AAC06981.1"/>
    <property type="molecule type" value="Genomic_DNA"/>
</dbReference>
<dbReference type="PIR" id="H70372">
    <property type="entry name" value="H70372"/>
</dbReference>
<dbReference type="RefSeq" id="NP_213572.1">
    <property type="nucleotide sequence ID" value="NC_000918.1"/>
</dbReference>
<dbReference type="RefSeq" id="WP_010880510.1">
    <property type="nucleotide sequence ID" value="NC_000918.1"/>
</dbReference>
<dbReference type="SMR" id="O67011"/>
<dbReference type="FunCoup" id="O67011">
    <property type="interactions" value="238"/>
</dbReference>
<dbReference type="STRING" id="224324.aq_843"/>
<dbReference type="EnsemblBacteria" id="AAC06981">
    <property type="protein sequence ID" value="AAC06981"/>
    <property type="gene ID" value="aq_843"/>
</dbReference>
<dbReference type="KEGG" id="aae:aq_843"/>
<dbReference type="PATRIC" id="fig|224324.8.peg.657"/>
<dbReference type="eggNOG" id="COG0802">
    <property type="taxonomic scope" value="Bacteria"/>
</dbReference>
<dbReference type="HOGENOM" id="CLU_087829_5_2_0"/>
<dbReference type="InParanoid" id="O67011"/>
<dbReference type="OrthoDB" id="9815896at2"/>
<dbReference type="Proteomes" id="UP000000798">
    <property type="component" value="Chromosome"/>
</dbReference>
<dbReference type="GO" id="GO:0005737">
    <property type="term" value="C:cytoplasm"/>
    <property type="evidence" value="ECO:0007669"/>
    <property type="project" value="UniProtKB-SubCell"/>
</dbReference>
<dbReference type="GO" id="GO:0005524">
    <property type="term" value="F:ATP binding"/>
    <property type="evidence" value="ECO:0007669"/>
    <property type="project" value="UniProtKB-KW"/>
</dbReference>
<dbReference type="GO" id="GO:0046872">
    <property type="term" value="F:metal ion binding"/>
    <property type="evidence" value="ECO:0007669"/>
    <property type="project" value="UniProtKB-KW"/>
</dbReference>
<dbReference type="GO" id="GO:0002949">
    <property type="term" value="P:tRNA threonylcarbamoyladenosine modification"/>
    <property type="evidence" value="ECO:0000318"/>
    <property type="project" value="GO_Central"/>
</dbReference>
<dbReference type="Gene3D" id="3.40.50.300">
    <property type="entry name" value="P-loop containing nucleotide triphosphate hydrolases"/>
    <property type="match status" value="1"/>
</dbReference>
<dbReference type="InterPro" id="IPR027417">
    <property type="entry name" value="P-loop_NTPase"/>
</dbReference>
<dbReference type="InterPro" id="IPR003442">
    <property type="entry name" value="T6A_TsaE"/>
</dbReference>
<dbReference type="NCBIfam" id="TIGR00150">
    <property type="entry name" value="T6A_YjeE"/>
    <property type="match status" value="1"/>
</dbReference>
<dbReference type="PANTHER" id="PTHR33540">
    <property type="entry name" value="TRNA THREONYLCARBAMOYLADENOSINE BIOSYNTHESIS PROTEIN TSAE"/>
    <property type="match status" value="1"/>
</dbReference>
<dbReference type="PANTHER" id="PTHR33540:SF2">
    <property type="entry name" value="TRNA THREONYLCARBAMOYLADENOSINE BIOSYNTHESIS PROTEIN TSAE"/>
    <property type="match status" value="1"/>
</dbReference>
<dbReference type="Pfam" id="PF02367">
    <property type="entry name" value="TsaE"/>
    <property type="match status" value="1"/>
</dbReference>
<dbReference type="SUPFAM" id="SSF52540">
    <property type="entry name" value="P-loop containing nucleoside triphosphate hydrolases"/>
    <property type="match status" value="1"/>
</dbReference>
<organism>
    <name type="scientific">Aquifex aeolicus (strain VF5)</name>
    <dbReference type="NCBI Taxonomy" id="224324"/>
    <lineage>
        <taxon>Bacteria</taxon>
        <taxon>Pseudomonadati</taxon>
        <taxon>Aquificota</taxon>
        <taxon>Aquificia</taxon>
        <taxon>Aquificales</taxon>
        <taxon>Aquificaceae</taxon>
        <taxon>Aquifex</taxon>
    </lineage>
</organism>
<keyword id="KW-0067">ATP-binding</keyword>
<keyword id="KW-0963">Cytoplasm</keyword>
<keyword id="KW-0460">Magnesium</keyword>
<keyword id="KW-0479">Metal-binding</keyword>
<keyword id="KW-0547">Nucleotide-binding</keyword>
<keyword id="KW-1185">Reference proteome</keyword>
<keyword id="KW-0819">tRNA processing</keyword>
<gene>
    <name type="primary">tsaE</name>
    <name type="ordered locus">aq_843</name>
</gene>
<evidence type="ECO:0000250" key="1"/>
<evidence type="ECO:0000305" key="2"/>